<gene>
    <name type="primary">alr1</name>
    <name type="ordered locus">TTE1207</name>
</gene>
<feature type="chain" id="PRO_0000114588" description="Alanine racemase 1">
    <location>
        <begin position="1"/>
        <end position="388"/>
    </location>
</feature>
<feature type="active site" description="Proton acceptor; specific for D-alanine" evidence="1">
    <location>
        <position position="40"/>
    </location>
</feature>
<feature type="active site" description="Proton acceptor; specific for L-alanine" evidence="1">
    <location>
        <position position="268"/>
    </location>
</feature>
<feature type="binding site" evidence="1">
    <location>
        <position position="138"/>
    </location>
    <ligand>
        <name>substrate</name>
    </ligand>
</feature>
<feature type="binding site" evidence="1">
    <location>
        <position position="316"/>
    </location>
    <ligand>
        <name>substrate</name>
    </ligand>
</feature>
<feature type="modified residue" description="N6-(pyridoxal phosphate)lysine" evidence="1">
    <location>
        <position position="40"/>
    </location>
</feature>
<feature type="strand" evidence="2">
    <location>
        <begin position="8"/>
        <end position="14"/>
    </location>
</feature>
<feature type="helix" evidence="2">
    <location>
        <begin position="15"/>
        <end position="28"/>
    </location>
</feature>
<feature type="strand" evidence="2">
    <location>
        <begin position="34"/>
        <end position="38"/>
    </location>
</feature>
<feature type="helix" evidence="2">
    <location>
        <begin position="40"/>
        <end position="45"/>
    </location>
</feature>
<feature type="helix" evidence="2">
    <location>
        <begin position="48"/>
        <end position="58"/>
    </location>
</feature>
<feature type="strand" evidence="2">
    <location>
        <begin position="61"/>
        <end position="67"/>
    </location>
</feature>
<feature type="helix" evidence="2">
    <location>
        <begin position="68"/>
        <end position="76"/>
    </location>
</feature>
<feature type="strand" evidence="2">
    <location>
        <begin position="83"/>
        <end position="85"/>
    </location>
</feature>
<feature type="helix" evidence="2">
    <location>
        <begin position="91"/>
        <end position="93"/>
    </location>
</feature>
<feature type="helix" evidence="2">
    <location>
        <begin position="94"/>
        <end position="99"/>
    </location>
</feature>
<feature type="strand" evidence="2">
    <location>
        <begin position="103"/>
        <end position="106"/>
    </location>
</feature>
<feature type="helix" evidence="2">
    <location>
        <begin position="109"/>
        <end position="121"/>
    </location>
</feature>
<feature type="strand" evidence="2">
    <location>
        <begin position="126"/>
        <end position="132"/>
    </location>
</feature>
<feature type="strand" evidence="2">
    <location>
        <begin position="134"/>
        <end position="136"/>
    </location>
</feature>
<feature type="strand" evidence="2">
    <location>
        <begin position="138"/>
        <end position="142"/>
    </location>
</feature>
<feature type="helix" evidence="2">
    <location>
        <begin position="144"/>
        <end position="155"/>
    </location>
</feature>
<feature type="strand" evidence="2">
    <location>
        <begin position="160"/>
        <end position="166"/>
    </location>
</feature>
<feature type="turn" evidence="2">
    <location>
        <begin position="172"/>
        <end position="175"/>
    </location>
</feature>
<feature type="helix" evidence="2">
    <location>
        <begin position="177"/>
        <end position="195"/>
    </location>
</feature>
<feature type="turn" evidence="2">
    <location>
        <begin position="196"/>
        <end position="198"/>
    </location>
</feature>
<feature type="strand" evidence="2">
    <location>
        <begin position="202"/>
        <end position="208"/>
    </location>
</feature>
<feature type="helix" evidence="2">
    <location>
        <begin position="209"/>
        <end position="214"/>
    </location>
</feature>
<feature type="helix" evidence="2">
    <location>
        <begin position="216"/>
        <end position="219"/>
    </location>
</feature>
<feature type="strand" evidence="2">
    <location>
        <begin position="220"/>
        <end position="224"/>
    </location>
</feature>
<feature type="helix" evidence="2">
    <location>
        <begin position="227"/>
        <end position="230"/>
    </location>
</feature>
<feature type="strand" evidence="2">
    <location>
        <begin position="236"/>
        <end position="238"/>
    </location>
</feature>
<feature type="strand" evidence="2">
    <location>
        <begin position="248"/>
        <end position="253"/>
    </location>
</feature>
<feature type="strand" evidence="2">
    <location>
        <begin position="256"/>
        <end position="260"/>
    </location>
</feature>
<feature type="strand" evidence="2">
    <location>
        <begin position="265"/>
        <end position="267"/>
    </location>
</feature>
<feature type="helix" evidence="2">
    <location>
        <begin position="268"/>
        <end position="270"/>
    </location>
</feature>
<feature type="strand" evidence="2">
    <location>
        <begin position="278"/>
        <end position="284"/>
    </location>
</feature>
<feature type="helix" evidence="2">
    <location>
        <begin position="287"/>
        <end position="289"/>
    </location>
</feature>
<feature type="helix" evidence="2">
    <location>
        <begin position="293"/>
        <end position="295"/>
    </location>
</feature>
<feature type="strand" evidence="2">
    <location>
        <begin position="300"/>
        <end position="303"/>
    </location>
</feature>
<feature type="strand" evidence="2">
    <location>
        <begin position="306"/>
        <end position="312"/>
    </location>
</feature>
<feature type="strand" evidence="2">
    <location>
        <begin position="319"/>
        <end position="322"/>
    </location>
</feature>
<feature type="strand" evidence="2">
    <location>
        <begin position="334"/>
        <end position="340"/>
    </location>
</feature>
<feature type="helix" evidence="2">
    <location>
        <begin position="348"/>
        <end position="354"/>
    </location>
</feature>
<feature type="helix" evidence="2">
    <location>
        <begin position="359"/>
        <end position="365"/>
    </location>
</feature>
<feature type="strand" evidence="2">
    <location>
        <begin position="372"/>
        <end position="376"/>
    </location>
</feature>
<feature type="strand" evidence="2">
    <location>
        <begin position="379"/>
        <end position="384"/>
    </location>
</feature>
<organism>
    <name type="scientific">Caldanaerobacter subterraneus subsp. tengcongensis (strain DSM 15242 / JCM 11007 / NBRC 100824 / MB4)</name>
    <name type="common">Thermoanaerobacter tengcongensis</name>
    <dbReference type="NCBI Taxonomy" id="273068"/>
    <lineage>
        <taxon>Bacteria</taxon>
        <taxon>Bacillati</taxon>
        <taxon>Bacillota</taxon>
        <taxon>Clostridia</taxon>
        <taxon>Thermoanaerobacterales</taxon>
        <taxon>Thermoanaerobacteraceae</taxon>
        <taxon>Caldanaerobacter</taxon>
    </lineage>
</organism>
<sequence>MKFDGVRPTRVEVYLDAITHNFREIKKIVGKNVKIMAVIKGDAYGHGASYVAKFLEKEGVDYFGVATTEEALELREKGIKTPILIFGYTPPTQLRQIVKHDLTQTVYDIKYAKELEKESLKQNKRAKVHIKIDTGLGRIGYIDFDLAQKEILEMANMRGLILEGIYSHFAAASEDDRDYCKEQFDKFMNLISSLEKKRLKIPLKHIANAAAILNLNYSHLDMVRPGIILFGAYPSKRVERKVELRETLRFTTRVVHLKDVPAGFFIGYGKSFVTKRKSVIATIPVGYADGLDRRLSNNYKLLLKGKYVPIVGRVCMDQCMIDVTDVEGVEIGDEVVIIGTQNNETVSVESMADKIETIPQEVFSRISRRVPRVYFYDGIKIGEVNYLK</sequence>
<name>ALR1_CALS4</name>
<accession>Q8RAK6</accession>
<dbReference type="EC" id="5.1.1.1" evidence="1"/>
<dbReference type="EMBL" id="AE008691">
    <property type="protein sequence ID" value="AAM24437.1"/>
    <property type="molecule type" value="Genomic_DNA"/>
</dbReference>
<dbReference type="RefSeq" id="WP_011025537.1">
    <property type="nucleotide sequence ID" value="NC_003869.1"/>
</dbReference>
<dbReference type="PDB" id="4Y2W">
    <property type="method" value="X-ray"/>
    <property type="resolution" value="2.70 A"/>
    <property type="chains" value="A/B=1-388"/>
</dbReference>
<dbReference type="PDBsum" id="4Y2W"/>
<dbReference type="SMR" id="Q8RAK6"/>
<dbReference type="STRING" id="273068.TTE1207"/>
<dbReference type="KEGG" id="tte:TTE1207"/>
<dbReference type="eggNOG" id="COG0787">
    <property type="taxonomic scope" value="Bacteria"/>
</dbReference>
<dbReference type="HOGENOM" id="CLU_028393_2_2_9"/>
<dbReference type="OrthoDB" id="9813814at2"/>
<dbReference type="BRENDA" id="5.1.1.1">
    <property type="organism ID" value="6784"/>
</dbReference>
<dbReference type="UniPathway" id="UPA00042">
    <property type="reaction ID" value="UER00497"/>
</dbReference>
<dbReference type="EvolutionaryTrace" id="Q8RAK6"/>
<dbReference type="Proteomes" id="UP000000555">
    <property type="component" value="Chromosome"/>
</dbReference>
<dbReference type="GO" id="GO:0005829">
    <property type="term" value="C:cytosol"/>
    <property type="evidence" value="ECO:0007669"/>
    <property type="project" value="TreeGrafter"/>
</dbReference>
<dbReference type="GO" id="GO:0008784">
    <property type="term" value="F:alanine racemase activity"/>
    <property type="evidence" value="ECO:0007669"/>
    <property type="project" value="UniProtKB-UniRule"/>
</dbReference>
<dbReference type="GO" id="GO:0030170">
    <property type="term" value="F:pyridoxal phosphate binding"/>
    <property type="evidence" value="ECO:0007669"/>
    <property type="project" value="UniProtKB-UniRule"/>
</dbReference>
<dbReference type="GO" id="GO:0030632">
    <property type="term" value="P:D-alanine biosynthetic process"/>
    <property type="evidence" value="ECO:0007669"/>
    <property type="project" value="UniProtKB-UniRule"/>
</dbReference>
<dbReference type="GO" id="GO:0009252">
    <property type="term" value="P:peptidoglycan biosynthetic process"/>
    <property type="evidence" value="ECO:0007669"/>
    <property type="project" value="TreeGrafter"/>
</dbReference>
<dbReference type="CDD" id="cd00430">
    <property type="entry name" value="PLPDE_III_AR"/>
    <property type="match status" value="1"/>
</dbReference>
<dbReference type="FunFam" id="2.40.37.10:FF:000006">
    <property type="entry name" value="Alanine racemase"/>
    <property type="match status" value="1"/>
</dbReference>
<dbReference type="FunFam" id="3.20.20.10:FF:000002">
    <property type="entry name" value="Alanine racemase"/>
    <property type="match status" value="1"/>
</dbReference>
<dbReference type="Gene3D" id="3.20.20.10">
    <property type="entry name" value="Alanine racemase"/>
    <property type="match status" value="1"/>
</dbReference>
<dbReference type="Gene3D" id="2.40.37.10">
    <property type="entry name" value="Lyase, Ornithine Decarboxylase, Chain A, domain 1"/>
    <property type="match status" value="1"/>
</dbReference>
<dbReference type="HAMAP" id="MF_01201">
    <property type="entry name" value="Ala_racemase"/>
    <property type="match status" value="1"/>
</dbReference>
<dbReference type="InterPro" id="IPR000821">
    <property type="entry name" value="Ala_racemase"/>
</dbReference>
<dbReference type="InterPro" id="IPR009006">
    <property type="entry name" value="Ala_racemase/Decarboxylase_C"/>
</dbReference>
<dbReference type="InterPro" id="IPR011079">
    <property type="entry name" value="Ala_racemase_C"/>
</dbReference>
<dbReference type="InterPro" id="IPR001608">
    <property type="entry name" value="Ala_racemase_N"/>
</dbReference>
<dbReference type="InterPro" id="IPR020622">
    <property type="entry name" value="Ala_racemase_pyridoxalP-BS"/>
</dbReference>
<dbReference type="InterPro" id="IPR029066">
    <property type="entry name" value="PLP-binding_barrel"/>
</dbReference>
<dbReference type="NCBIfam" id="TIGR00492">
    <property type="entry name" value="alr"/>
    <property type="match status" value="1"/>
</dbReference>
<dbReference type="PANTHER" id="PTHR30511">
    <property type="entry name" value="ALANINE RACEMASE"/>
    <property type="match status" value="1"/>
</dbReference>
<dbReference type="PANTHER" id="PTHR30511:SF0">
    <property type="entry name" value="ALANINE RACEMASE, CATABOLIC-RELATED"/>
    <property type="match status" value="1"/>
</dbReference>
<dbReference type="Pfam" id="PF00842">
    <property type="entry name" value="Ala_racemase_C"/>
    <property type="match status" value="1"/>
</dbReference>
<dbReference type="Pfam" id="PF01168">
    <property type="entry name" value="Ala_racemase_N"/>
    <property type="match status" value="1"/>
</dbReference>
<dbReference type="PRINTS" id="PR00992">
    <property type="entry name" value="ALARACEMASE"/>
</dbReference>
<dbReference type="SMART" id="SM01005">
    <property type="entry name" value="Ala_racemase_C"/>
    <property type="match status" value="1"/>
</dbReference>
<dbReference type="SUPFAM" id="SSF50621">
    <property type="entry name" value="Alanine racemase C-terminal domain-like"/>
    <property type="match status" value="1"/>
</dbReference>
<dbReference type="SUPFAM" id="SSF51419">
    <property type="entry name" value="PLP-binding barrel"/>
    <property type="match status" value="1"/>
</dbReference>
<dbReference type="PROSITE" id="PS00395">
    <property type="entry name" value="ALANINE_RACEMASE"/>
    <property type="match status" value="1"/>
</dbReference>
<protein>
    <recommendedName>
        <fullName evidence="1">Alanine racemase 1</fullName>
        <ecNumber evidence="1">5.1.1.1</ecNumber>
    </recommendedName>
</protein>
<evidence type="ECO:0000255" key="1">
    <source>
        <dbReference type="HAMAP-Rule" id="MF_01201"/>
    </source>
</evidence>
<evidence type="ECO:0007829" key="2">
    <source>
        <dbReference type="PDB" id="4Y2W"/>
    </source>
</evidence>
<reference key="1">
    <citation type="journal article" date="2002" name="Genome Res.">
        <title>A complete sequence of the T. tengcongensis genome.</title>
        <authorList>
            <person name="Bao Q."/>
            <person name="Tian Y."/>
            <person name="Li W."/>
            <person name="Xu Z."/>
            <person name="Xuan Z."/>
            <person name="Hu S."/>
            <person name="Dong W."/>
            <person name="Yang J."/>
            <person name="Chen Y."/>
            <person name="Xue Y."/>
            <person name="Xu Y."/>
            <person name="Lai X."/>
            <person name="Huang L."/>
            <person name="Dong X."/>
            <person name="Ma Y."/>
            <person name="Ling L."/>
            <person name="Tan H."/>
            <person name="Chen R."/>
            <person name="Wang J."/>
            <person name="Yu J."/>
            <person name="Yang H."/>
        </authorList>
    </citation>
    <scope>NUCLEOTIDE SEQUENCE [LARGE SCALE GENOMIC DNA]</scope>
    <source>
        <strain>DSM 15242 / JCM 11007 / NBRC 100824 / MB4</strain>
    </source>
</reference>
<keyword id="KW-0002">3D-structure</keyword>
<keyword id="KW-0413">Isomerase</keyword>
<keyword id="KW-0663">Pyridoxal phosphate</keyword>
<keyword id="KW-1185">Reference proteome</keyword>
<comment type="function">
    <text evidence="1">Catalyzes the interconversion of L-alanine and D-alanine. May also act on other amino acids.</text>
</comment>
<comment type="catalytic activity">
    <reaction evidence="1">
        <text>L-alanine = D-alanine</text>
        <dbReference type="Rhea" id="RHEA:20249"/>
        <dbReference type="ChEBI" id="CHEBI:57416"/>
        <dbReference type="ChEBI" id="CHEBI:57972"/>
        <dbReference type="EC" id="5.1.1.1"/>
    </reaction>
</comment>
<comment type="cofactor">
    <cofactor evidence="1">
        <name>pyridoxal 5'-phosphate</name>
        <dbReference type="ChEBI" id="CHEBI:597326"/>
    </cofactor>
</comment>
<comment type="pathway">
    <text evidence="1">Amino-acid biosynthesis; D-alanine biosynthesis; D-alanine from L-alanine: step 1/1.</text>
</comment>
<comment type="similarity">
    <text evidence="1">Belongs to the alanine racemase family.</text>
</comment>
<proteinExistence type="evidence at protein level"/>